<feature type="chain" id="PRO_0000211788" description="Pyrimidine/purine nucleoside phosphorylase">
    <location>
        <begin position="1"/>
        <end position="93"/>
    </location>
</feature>
<reference key="1">
    <citation type="journal article" date="2003" name="Genome Res.">
        <title>Comparative genome analysis of Vibrio vulnificus, a marine pathogen.</title>
        <authorList>
            <person name="Chen C.-Y."/>
            <person name="Wu K.-M."/>
            <person name="Chang Y.-C."/>
            <person name="Chang C.-H."/>
            <person name="Tsai H.-C."/>
            <person name="Liao T.-L."/>
            <person name="Liu Y.-M."/>
            <person name="Chen H.-J."/>
            <person name="Shen A.B.-T."/>
            <person name="Li J.-C."/>
            <person name="Su T.-L."/>
            <person name="Shao C.-P."/>
            <person name="Lee C.-T."/>
            <person name="Hor L.-I."/>
            <person name="Tsai S.-F."/>
        </authorList>
    </citation>
    <scope>NUCLEOTIDE SEQUENCE [LARGE SCALE GENOMIC DNA]</scope>
    <source>
        <strain>YJ016</strain>
    </source>
</reference>
<accession>Q7MGC2</accession>
<comment type="function">
    <text evidence="1">Catalyzes the phosphorolysis of diverse nucleosides, yielding D-ribose 1-phosphate and the respective free bases. Can use uridine, adenosine, guanosine, cytidine, thymidine, inosine and xanthosine as substrates. Also catalyzes the reverse reactions.</text>
</comment>
<comment type="catalytic activity">
    <reaction evidence="1">
        <text>a purine D-ribonucleoside + phosphate = a purine nucleobase + alpha-D-ribose 1-phosphate</text>
        <dbReference type="Rhea" id="RHEA:19805"/>
        <dbReference type="ChEBI" id="CHEBI:26386"/>
        <dbReference type="ChEBI" id="CHEBI:43474"/>
        <dbReference type="ChEBI" id="CHEBI:57720"/>
        <dbReference type="ChEBI" id="CHEBI:142355"/>
        <dbReference type="EC" id="2.4.2.1"/>
    </reaction>
</comment>
<comment type="catalytic activity">
    <reaction evidence="1">
        <text>adenosine + phosphate = alpha-D-ribose 1-phosphate + adenine</text>
        <dbReference type="Rhea" id="RHEA:27642"/>
        <dbReference type="ChEBI" id="CHEBI:16335"/>
        <dbReference type="ChEBI" id="CHEBI:16708"/>
        <dbReference type="ChEBI" id="CHEBI:43474"/>
        <dbReference type="ChEBI" id="CHEBI:57720"/>
        <dbReference type="EC" id="2.4.2.1"/>
    </reaction>
</comment>
<comment type="catalytic activity">
    <reaction evidence="1">
        <text>cytidine + phosphate = cytosine + alpha-D-ribose 1-phosphate</text>
        <dbReference type="Rhea" id="RHEA:52540"/>
        <dbReference type="ChEBI" id="CHEBI:16040"/>
        <dbReference type="ChEBI" id="CHEBI:17562"/>
        <dbReference type="ChEBI" id="CHEBI:43474"/>
        <dbReference type="ChEBI" id="CHEBI:57720"/>
        <dbReference type="EC" id="2.4.2.2"/>
    </reaction>
</comment>
<comment type="catalytic activity">
    <reaction evidence="1">
        <text>guanosine + phosphate = alpha-D-ribose 1-phosphate + guanine</text>
        <dbReference type="Rhea" id="RHEA:13233"/>
        <dbReference type="ChEBI" id="CHEBI:16235"/>
        <dbReference type="ChEBI" id="CHEBI:16750"/>
        <dbReference type="ChEBI" id="CHEBI:43474"/>
        <dbReference type="ChEBI" id="CHEBI:57720"/>
        <dbReference type="EC" id="2.4.2.1"/>
    </reaction>
</comment>
<comment type="catalytic activity">
    <reaction evidence="1">
        <text>inosine + phosphate = alpha-D-ribose 1-phosphate + hypoxanthine</text>
        <dbReference type="Rhea" id="RHEA:27646"/>
        <dbReference type="ChEBI" id="CHEBI:17368"/>
        <dbReference type="ChEBI" id="CHEBI:17596"/>
        <dbReference type="ChEBI" id="CHEBI:43474"/>
        <dbReference type="ChEBI" id="CHEBI:57720"/>
        <dbReference type="EC" id="2.4.2.1"/>
    </reaction>
</comment>
<comment type="catalytic activity">
    <reaction evidence="1">
        <text>thymidine + phosphate = 2-deoxy-alpha-D-ribose 1-phosphate + thymine</text>
        <dbReference type="Rhea" id="RHEA:16037"/>
        <dbReference type="ChEBI" id="CHEBI:17748"/>
        <dbReference type="ChEBI" id="CHEBI:17821"/>
        <dbReference type="ChEBI" id="CHEBI:43474"/>
        <dbReference type="ChEBI" id="CHEBI:57259"/>
        <dbReference type="EC" id="2.4.2.2"/>
    </reaction>
</comment>
<comment type="catalytic activity">
    <reaction evidence="1">
        <text>uridine + phosphate = alpha-D-ribose 1-phosphate + uracil</text>
        <dbReference type="Rhea" id="RHEA:24388"/>
        <dbReference type="ChEBI" id="CHEBI:16704"/>
        <dbReference type="ChEBI" id="CHEBI:17568"/>
        <dbReference type="ChEBI" id="CHEBI:43474"/>
        <dbReference type="ChEBI" id="CHEBI:57720"/>
        <dbReference type="EC" id="2.4.2.2"/>
    </reaction>
</comment>
<comment type="catalytic activity">
    <reaction evidence="1">
        <text>xanthosine + phosphate = alpha-D-ribose 1-phosphate + xanthine</text>
        <dbReference type="Rhea" id="RHEA:27638"/>
        <dbReference type="ChEBI" id="CHEBI:17712"/>
        <dbReference type="ChEBI" id="CHEBI:18107"/>
        <dbReference type="ChEBI" id="CHEBI:43474"/>
        <dbReference type="ChEBI" id="CHEBI:57720"/>
        <dbReference type="EC" id="2.4.2.1"/>
    </reaction>
</comment>
<comment type="similarity">
    <text evidence="1">Belongs to the nucleoside phosphorylase PpnP family.</text>
</comment>
<dbReference type="EC" id="2.4.2.1" evidence="1"/>
<dbReference type="EC" id="2.4.2.2" evidence="1"/>
<dbReference type="EMBL" id="BA000038">
    <property type="protein sequence ID" value="BAC96073.1"/>
    <property type="molecule type" value="Genomic_DNA"/>
</dbReference>
<dbReference type="RefSeq" id="WP_011082111.1">
    <property type="nucleotide sequence ID" value="NC_005140.1"/>
</dbReference>
<dbReference type="SMR" id="Q7MGC2"/>
<dbReference type="STRING" id="672.VV93_v1c30550"/>
<dbReference type="KEGG" id="vvy:VVA0047"/>
<dbReference type="eggNOG" id="COG3123">
    <property type="taxonomic scope" value="Bacteria"/>
</dbReference>
<dbReference type="HOGENOM" id="CLU_157874_0_0_6"/>
<dbReference type="Proteomes" id="UP000002675">
    <property type="component" value="Chromosome II"/>
</dbReference>
<dbReference type="GO" id="GO:0005829">
    <property type="term" value="C:cytosol"/>
    <property type="evidence" value="ECO:0007669"/>
    <property type="project" value="TreeGrafter"/>
</dbReference>
<dbReference type="GO" id="GO:0047975">
    <property type="term" value="F:guanosine phosphorylase activity"/>
    <property type="evidence" value="ECO:0007669"/>
    <property type="project" value="UniProtKB-EC"/>
</dbReference>
<dbReference type="GO" id="GO:0004731">
    <property type="term" value="F:purine-nucleoside phosphorylase activity"/>
    <property type="evidence" value="ECO:0007669"/>
    <property type="project" value="UniProtKB-UniRule"/>
</dbReference>
<dbReference type="GO" id="GO:0009032">
    <property type="term" value="F:thymidine phosphorylase activity"/>
    <property type="evidence" value="ECO:0007669"/>
    <property type="project" value="UniProtKB-EC"/>
</dbReference>
<dbReference type="GO" id="GO:0004850">
    <property type="term" value="F:uridine phosphorylase activity"/>
    <property type="evidence" value="ECO:0007669"/>
    <property type="project" value="UniProtKB-EC"/>
</dbReference>
<dbReference type="CDD" id="cd20296">
    <property type="entry name" value="cupin_PpnP-like"/>
    <property type="match status" value="1"/>
</dbReference>
<dbReference type="FunFam" id="2.60.120.10:FF:000016">
    <property type="entry name" value="Pyrimidine/purine nucleoside phosphorylase"/>
    <property type="match status" value="1"/>
</dbReference>
<dbReference type="Gene3D" id="2.60.120.10">
    <property type="entry name" value="Jelly Rolls"/>
    <property type="match status" value="1"/>
</dbReference>
<dbReference type="HAMAP" id="MF_01537">
    <property type="entry name" value="Nucleos_phosphorylase_PpnP"/>
    <property type="match status" value="1"/>
</dbReference>
<dbReference type="InterPro" id="IPR009664">
    <property type="entry name" value="Ppnp"/>
</dbReference>
<dbReference type="InterPro" id="IPR014710">
    <property type="entry name" value="RmlC-like_jellyroll"/>
</dbReference>
<dbReference type="InterPro" id="IPR011051">
    <property type="entry name" value="RmlC_Cupin_sf"/>
</dbReference>
<dbReference type="PANTHER" id="PTHR36540">
    <property type="entry name" value="PYRIMIDINE/PURINE NUCLEOSIDE PHOSPHORYLASE"/>
    <property type="match status" value="1"/>
</dbReference>
<dbReference type="PANTHER" id="PTHR36540:SF1">
    <property type="entry name" value="PYRIMIDINE_PURINE NUCLEOSIDE PHOSPHORYLASE"/>
    <property type="match status" value="1"/>
</dbReference>
<dbReference type="Pfam" id="PF06865">
    <property type="entry name" value="Ppnp"/>
    <property type="match status" value="1"/>
</dbReference>
<dbReference type="SUPFAM" id="SSF51182">
    <property type="entry name" value="RmlC-like cupins"/>
    <property type="match status" value="1"/>
</dbReference>
<gene>
    <name evidence="1" type="primary">ppnP</name>
    <name type="ordered locus">VVA0047</name>
</gene>
<protein>
    <recommendedName>
        <fullName evidence="1">Pyrimidine/purine nucleoside phosphorylase</fullName>
        <ecNumber evidence="1">2.4.2.1</ecNumber>
        <ecNumber evidence="1">2.4.2.2</ecNumber>
    </recommendedName>
    <alternativeName>
        <fullName evidence="1">Adenosine phosphorylase</fullName>
    </alternativeName>
    <alternativeName>
        <fullName evidence="1">Cytidine phosphorylase</fullName>
    </alternativeName>
    <alternativeName>
        <fullName evidence="1">Guanosine phosphorylase</fullName>
    </alternativeName>
    <alternativeName>
        <fullName evidence="1">Inosine phosphorylase</fullName>
    </alternativeName>
    <alternativeName>
        <fullName evidence="1">Thymidine phosphorylase</fullName>
    </alternativeName>
    <alternativeName>
        <fullName evidence="1">Uridine phosphorylase</fullName>
    </alternativeName>
    <alternativeName>
        <fullName evidence="1">Xanthosine phosphorylase</fullName>
    </alternativeName>
</protein>
<keyword id="KW-0328">Glycosyltransferase</keyword>
<keyword id="KW-0808">Transferase</keyword>
<evidence type="ECO:0000255" key="1">
    <source>
        <dbReference type="HAMAP-Rule" id="MF_01537"/>
    </source>
</evidence>
<organism>
    <name type="scientific">Vibrio vulnificus (strain YJ016)</name>
    <dbReference type="NCBI Taxonomy" id="196600"/>
    <lineage>
        <taxon>Bacteria</taxon>
        <taxon>Pseudomonadati</taxon>
        <taxon>Pseudomonadota</taxon>
        <taxon>Gammaproteobacteria</taxon>
        <taxon>Vibrionales</taxon>
        <taxon>Vibrionaceae</taxon>
        <taxon>Vibrio</taxon>
    </lineage>
</organism>
<sequence length="93" mass="10172">MIKENSYFAGNVKSLGFNQQGEDSSVGVMLPGNYTFGTDAPERMTVVKGALVIKREGDEEWSTYQAGEAFEVAGKSSFDLQVEVATAYLCEYL</sequence>
<proteinExistence type="inferred from homology"/>
<name>PPNP_VIBVY</name>